<proteinExistence type="inferred from homology"/>
<keyword id="KW-0186">Copper</keyword>
<keyword id="KW-0963">Cytoplasm</keyword>
<keyword id="KW-0479">Metal-binding</keyword>
<accession>B1XD17</accession>
<comment type="function">
    <text evidence="1">Involved in resistance toward heavy metals.</text>
</comment>
<comment type="cofactor">
    <cofactor evidence="1">
        <name>Cu cation</name>
        <dbReference type="ChEBI" id="CHEBI:23378"/>
    </cofactor>
    <text evidence="1">Binds 1 copper ion per subunit.</text>
</comment>
<comment type="subunit">
    <text evidence="1">Homotrimer.</text>
</comment>
<comment type="subcellular location">
    <subcellularLocation>
        <location evidence="1">Cytoplasm</location>
    </subcellularLocation>
</comment>
<comment type="similarity">
    <text evidence="1">Belongs to the CutA family.</text>
</comment>
<feature type="chain" id="PRO_1000137843" description="Divalent-cation tolerance protein CutA">
    <location>
        <begin position="1"/>
        <end position="112"/>
    </location>
</feature>
<feature type="binding site" evidence="1">
    <location>
        <position position="16"/>
    </location>
    <ligand>
        <name>Cu cation</name>
        <dbReference type="ChEBI" id="CHEBI:23378"/>
    </ligand>
</feature>
<feature type="binding site" evidence="1">
    <location>
        <position position="83"/>
    </location>
    <ligand>
        <name>Cu cation</name>
        <dbReference type="ChEBI" id="CHEBI:23378"/>
    </ligand>
</feature>
<feature type="binding site" evidence="1">
    <location>
        <position position="84"/>
    </location>
    <ligand>
        <name>Cu cation</name>
        <dbReference type="ChEBI" id="CHEBI:23378"/>
    </ligand>
</feature>
<protein>
    <recommendedName>
        <fullName evidence="1">Divalent-cation tolerance protein CutA</fullName>
    </recommendedName>
</protein>
<name>CUTA_ECODH</name>
<sequence>MLDEKSSNTASVVVLCTAPDEATAQDLAAKVLAEKLAACATLIPGATSLYYWEGKLEQEYEVQMILKTTVSHQQALLECLKSHHPYQTPELLVLPVTHGDTDYLSWLNASLR</sequence>
<reference key="1">
    <citation type="journal article" date="2008" name="J. Bacteriol.">
        <title>The complete genome sequence of Escherichia coli DH10B: insights into the biology of a laboratory workhorse.</title>
        <authorList>
            <person name="Durfee T."/>
            <person name="Nelson R."/>
            <person name="Baldwin S."/>
            <person name="Plunkett G. III"/>
            <person name="Burland V."/>
            <person name="Mau B."/>
            <person name="Petrosino J.F."/>
            <person name="Qin X."/>
            <person name="Muzny D.M."/>
            <person name="Ayele M."/>
            <person name="Gibbs R.A."/>
            <person name="Csorgo B."/>
            <person name="Posfai G."/>
            <person name="Weinstock G.M."/>
            <person name="Blattner F.R."/>
        </authorList>
    </citation>
    <scope>NUCLEOTIDE SEQUENCE [LARGE SCALE GENOMIC DNA]</scope>
    <source>
        <strain>K12 / DH10B</strain>
    </source>
</reference>
<organism>
    <name type="scientific">Escherichia coli (strain K12 / DH10B)</name>
    <dbReference type="NCBI Taxonomy" id="316385"/>
    <lineage>
        <taxon>Bacteria</taxon>
        <taxon>Pseudomonadati</taxon>
        <taxon>Pseudomonadota</taxon>
        <taxon>Gammaproteobacteria</taxon>
        <taxon>Enterobacterales</taxon>
        <taxon>Enterobacteriaceae</taxon>
        <taxon>Escherichia</taxon>
    </lineage>
</organism>
<gene>
    <name evidence="1" type="primary">cutA</name>
    <name type="ordered locus">ECDH10B_4330</name>
</gene>
<evidence type="ECO:0000255" key="1">
    <source>
        <dbReference type="HAMAP-Rule" id="MF_01160"/>
    </source>
</evidence>
<dbReference type="EMBL" id="CP000948">
    <property type="protein sequence ID" value="ACB05128.1"/>
    <property type="molecule type" value="Genomic_DNA"/>
</dbReference>
<dbReference type="RefSeq" id="WP_000883400.1">
    <property type="nucleotide sequence ID" value="NC_010473.1"/>
</dbReference>
<dbReference type="BMRB" id="B1XD17"/>
<dbReference type="SMR" id="B1XD17"/>
<dbReference type="GeneID" id="93777687"/>
<dbReference type="KEGG" id="ecd:ECDH10B_4330"/>
<dbReference type="HOGENOM" id="CLU_098807_3_0_6"/>
<dbReference type="GO" id="GO:0005737">
    <property type="term" value="C:cytoplasm"/>
    <property type="evidence" value="ECO:0007669"/>
    <property type="project" value="UniProtKB-SubCell"/>
</dbReference>
<dbReference type="GO" id="GO:0005507">
    <property type="term" value="F:copper ion binding"/>
    <property type="evidence" value="ECO:0007669"/>
    <property type="project" value="UniProtKB-UniRule"/>
</dbReference>
<dbReference type="GO" id="GO:0010038">
    <property type="term" value="P:response to metal ion"/>
    <property type="evidence" value="ECO:0007669"/>
    <property type="project" value="InterPro"/>
</dbReference>
<dbReference type="FunFam" id="3.30.70.120:FF:000004">
    <property type="entry name" value="Divalent-cation tolerance protein CutA"/>
    <property type="match status" value="1"/>
</dbReference>
<dbReference type="Gene3D" id="3.30.70.120">
    <property type="match status" value="1"/>
</dbReference>
<dbReference type="HAMAP" id="MF_01160">
    <property type="entry name" value="CutA"/>
    <property type="match status" value="1"/>
</dbReference>
<dbReference type="InterPro" id="IPR023700">
    <property type="entry name" value="CutA_Enterobact"/>
</dbReference>
<dbReference type="InterPro" id="IPR004323">
    <property type="entry name" value="Ion_tolerance_CutA"/>
</dbReference>
<dbReference type="InterPro" id="IPR011322">
    <property type="entry name" value="N-reg_PII-like_a/b"/>
</dbReference>
<dbReference type="InterPro" id="IPR015867">
    <property type="entry name" value="N-reg_PII/ATP_PRibTrfase_C"/>
</dbReference>
<dbReference type="NCBIfam" id="NF007930">
    <property type="entry name" value="PRK10645.1"/>
    <property type="match status" value="1"/>
</dbReference>
<dbReference type="PANTHER" id="PTHR23419">
    <property type="entry name" value="DIVALENT CATION TOLERANCE CUTA-RELATED"/>
    <property type="match status" value="1"/>
</dbReference>
<dbReference type="PANTHER" id="PTHR23419:SF8">
    <property type="entry name" value="FI09726P"/>
    <property type="match status" value="1"/>
</dbReference>
<dbReference type="Pfam" id="PF03091">
    <property type="entry name" value="CutA1"/>
    <property type="match status" value="1"/>
</dbReference>
<dbReference type="SUPFAM" id="SSF54913">
    <property type="entry name" value="GlnB-like"/>
    <property type="match status" value="1"/>
</dbReference>